<reference key="1">
    <citation type="journal article" date="1985" name="Nucleic Acids Res.">
        <title>Complete nucleotide sequence of mRNA for caerulein precursor from Xenopus skin: the mRNA contains an unusual repetitive structure.</title>
        <authorList>
            <person name="Wakabayashi T."/>
            <person name="Kato H."/>
            <person name="Tachibana S."/>
        </authorList>
    </citation>
    <scope>NUCLEOTIDE SEQUENCE [MRNA]</scope>
    <source>
        <tissue>Skin</tissue>
    </source>
</reference>
<reference key="2">
    <citation type="journal article" date="1970" name="Br. J. Pharmacol.">
        <title>Presence of caerulein in extracts of the skin of Leptodactylus pentadactylus labyrinthicus and of Xenopus laevis.</title>
        <authorList>
            <person name="Anastasi A."/>
            <person name="Bertaccini G."/>
            <person name="Cei J.M."/>
            <person name="de Daro G."/>
            <person name="Erspamer V."/>
            <person name="Impicciatore M."/>
            <person name="Roseghini M."/>
        </authorList>
    </citation>
    <scope>PROTEIN SEQUENCE OF CAERULEIN</scope>
    <source>
        <tissue>Skin secretion</tissue>
    </source>
</reference>
<keyword id="KW-0027">Amidation</keyword>
<keyword id="KW-0878">Amphibian defense peptide</keyword>
<keyword id="KW-0165">Cleavage on pair of basic residues</keyword>
<keyword id="KW-0903">Direct protein sequencing</keyword>
<keyword id="KW-0677">Repeat</keyword>
<keyword id="KW-0964">Secreted</keyword>
<keyword id="KW-0732">Signal</keyword>
<keyword id="KW-0765">Sulfation</keyword>
<proteinExistence type="evidence at protein level"/>
<dbReference type="EMBL" id="X02310">
    <property type="protein sequence ID" value="CAA26180.1"/>
    <property type="molecule type" value="mRNA"/>
</dbReference>
<dbReference type="GO" id="GO:0030424">
    <property type="term" value="C:axon"/>
    <property type="evidence" value="ECO:0007669"/>
    <property type="project" value="TreeGrafter"/>
</dbReference>
<dbReference type="GO" id="GO:0005615">
    <property type="term" value="C:extracellular space"/>
    <property type="evidence" value="ECO:0007669"/>
    <property type="project" value="TreeGrafter"/>
</dbReference>
<dbReference type="GO" id="GO:0005184">
    <property type="term" value="F:neuropeptide hormone activity"/>
    <property type="evidence" value="ECO:0007669"/>
    <property type="project" value="InterPro"/>
</dbReference>
<dbReference type="GO" id="GO:0006952">
    <property type="term" value="P:defense response"/>
    <property type="evidence" value="ECO:0007669"/>
    <property type="project" value="UniProtKB-KW"/>
</dbReference>
<dbReference type="GO" id="GO:0007586">
    <property type="term" value="P:digestion"/>
    <property type="evidence" value="ECO:0007669"/>
    <property type="project" value="InterPro"/>
</dbReference>
<dbReference type="InterPro" id="IPR015499">
    <property type="entry name" value="CCK-like"/>
</dbReference>
<dbReference type="InterPro" id="IPR001651">
    <property type="entry name" value="Gastrin/CCK"/>
</dbReference>
<dbReference type="InterPro" id="IPR013152">
    <property type="entry name" value="Gastrin/cholecystokinin_CS"/>
</dbReference>
<dbReference type="PANTHER" id="PTHR10786">
    <property type="entry name" value="CHOLECYSTOKININ"/>
    <property type="match status" value="1"/>
</dbReference>
<dbReference type="PANTHER" id="PTHR10786:SF0">
    <property type="entry name" value="CHOLECYSTOKININ"/>
    <property type="match status" value="1"/>
</dbReference>
<dbReference type="Pfam" id="PF00918">
    <property type="entry name" value="Gastrin"/>
    <property type="match status" value="2"/>
</dbReference>
<dbReference type="SMART" id="SM00029">
    <property type="entry name" value="GASTRIN"/>
    <property type="match status" value="4"/>
</dbReference>
<dbReference type="PROSITE" id="PS00259">
    <property type="entry name" value="GASTRIN"/>
    <property type="match status" value="4"/>
</dbReference>
<comment type="function">
    <text>The pharmacological activities of caerulein are quite similar to the physiological activities of gastrin and related peptides.</text>
</comment>
<comment type="subcellular location">
    <subcellularLocation>
        <location>Secreted</location>
    </subcellularLocation>
</comment>
<comment type="tissue specificity">
    <text>Expressed by the skin glands.</text>
</comment>
<comment type="similarity">
    <text evidence="5">Belongs to the gastrin/cholecystokinin family.</text>
</comment>
<feature type="signal peptide" evidence="2">
    <location>
        <begin position="1"/>
        <end position="26"/>
    </location>
</feature>
<feature type="propeptide" id="PRO_0000010504" evidence="4">
    <location>
        <begin position="27"/>
        <end position="73"/>
    </location>
</feature>
<feature type="peptide" id="PRO_0000010505" description="Caerulein" evidence="4">
    <location>
        <begin position="74"/>
        <end position="83"/>
    </location>
</feature>
<feature type="propeptide" id="PRO_0000010506" evidence="4">
    <location>
        <begin position="87"/>
        <end position="137"/>
    </location>
</feature>
<feature type="peptide" id="PRO_0000010507" description="Caerulein" evidence="4">
    <location>
        <begin position="138"/>
        <end position="147"/>
    </location>
</feature>
<feature type="propeptide" id="PRO_0000010508" evidence="4">
    <location>
        <begin position="151"/>
        <end position="152"/>
    </location>
</feature>
<feature type="peptide" id="PRO_0000010509" description="Caerulein" evidence="4">
    <location>
        <begin position="153"/>
        <end position="162"/>
    </location>
</feature>
<feature type="propeptide" id="PRO_0000010510" evidence="4">
    <location>
        <begin position="166"/>
        <end position="216"/>
    </location>
</feature>
<feature type="peptide" id="PRO_0000010511" description="Caerulein" evidence="4">
    <location>
        <begin position="217"/>
        <end position="226"/>
    </location>
</feature>
<feature type="propeptide" id="PRO_0000010512" evidence="4">
    <location>
        <begin position="230"/>
        <end position="234"/>
    </location>
</feature>
<feature type="region of interest" description="Disordered" evidence="3">
    <location>
        <begin position="198"/>
        <end position="234"/>
    </location>
</feature>
<feature type="modified residue" description="Sulfotyrosine" evidence="1">
    <location>
        <position position="77"/>
    </location>
</feature>
<feature type="modified residue" description="Phenylalanine amide" evidence="1">
    <location>
        <position position="83"/>
    </location>
</feature>
<feature type="modified residue" description="Sulfotyrosine" evidence="1">
    <location>
        <position position="141"/>
    </location>
</feature>
<feature type="modified residue" description="Phenylalanine amide" evidence="1">
    <location>
        <position position="147"/>
    </location>
</feature>
<feature type="modified residue" description="Sulfotyrosine" evidence="1">
    <location>
        <position position="156"/>
    </location>
</feature>
<feature type="modified residue" description="Phenylalanine amide" evidence="1">
    <location>
        <position position="162"/>
    </location>
</feature>
<feature type="modified residue" description="Sulfotyrosine" evidence="1">
    <location>
        <position position="220"/>
    </location>
</feature>
<feature type="modified residue" description="Phenylalanine amide" evidence="1">
    <location>
        <position position="226"/>
    </location>
</feature>
<name>CAER4_XENBO</name>
<organism>
    <name type="scientific">Xenopus borealis</name>
    <name type="common">Kenyan clawed frog</name>
    <dbReference type="NCBI Taxonomy" id="8354"/>
    <lineage>
        <taxon>Eukaryota</taxon>
        <taxon>Metazoa</taxon>
        <taxon>Chordata</taxon>
        <taxon>Craniata</taxon>
        <taxon>Vertebrata</taxon>
        <taxon>Euteleostomi</taxon>
        <taxon>Amphibia</taxon>
        <taxon>Batrachia</taxon>
        <taxon>Anura</taxon>
        <taxon>Pipoidea</taxon>
        <taxon>Pipidae</taxon>
        <taxon>Xenopodinae</taxon>
        <taxon>Xenopus</taxon>
        <taxon>Xenopus</taxon>
    </lineage>
</organism>
<accession>P05226</accession>
<sequence>MFKGILLCVLFAVLSANPLSQPEGFADEEERDVRGLASLLGKALKAALKIGANALGGSPQQREANDERRFADGQQDYTGWMDFGRRDDEDDVNERDVRGFGSFLGKALKAGLKIGTHFLGGAPQQREANDERRFADGQQDYTGWMDFGRRDGQQDYTGWMDFGRRDDEDDVHERDVRGFGSFLGKALKAALKIGANALGGSPQQREANDERRFADGQQDYTGWMDFGRRNGEDD</sequence>
<protein>
    <recommendedName>
        <fullName>Preprocaerulein type-4</fullName>
    </recommendedName>
    <alternativeName>
        <fullName>Preprocaerulein type IV</fullName>
    </alternativeName>
    <component>
        <recommendedName>
            <fullName>Caerulein</fullName>
        </recommendedName>
    </component>
</protein>
<evidence type="ECO:0000250" key="1"/>
<evidence type="ECO:0000255" key="2"/>
<evidence type="ECO:0000256" key="3">
    <source>
        <dbReference type="SAM" id="MobiDB-lite"/>
    </source>
</evidence>
<evidence type="ECO:0000269" key="4">
    <source>
    </source>
</evidence>
<evidence type="ECO:0000305" key="5"/>